<dbReference type="EMBL" id="CP000083">
    <property type="protein sequence ID" value="AAZ26786.1"/>
    <property type="molecule type" value="Genomic_DNA"/>
</dbReference>
<dbReference type="RefSeq" id="WP_011043023.1">
    <property type="nucleotide sequence ID" value="NC_003910.7"/>
</dbReference>
<dbReference type="SMR" id="Q482T8"/>
<dbReference type="STRING" id="167879.CPS_2204"/>
<dbReference type="KEGG" id="cps:CPS_2204"/>
<dbReference type="eggNOG" id="COG0858">
    <property type="taxonomic scope" value="Bacteria"/>
</dbReference>
<dbReference type="HOGENOM" id="CLU_089475_5_0_6"/>
<dbReference type="Proteomes" id="UP000000547">
    <property type="component" value="Chromosome"/>
</dbReference>
<dbReference type="GO" id="GO:0005829">
    <property type="term" value="C:cytosol"/>
    <property type="evidence" value="ECO:0007669"/>
    <property type="project" value="TreeGrafter"/>
</dbReference>
<dbReference type="GO" id="GO:0043024">
    <property type="term" value="F:ribosomal small subunit binding"/>
    <property type="evidence" value="ECO:0007669"/>
    <property type="project" value="TreeGrafter"/>
</dbReference>
<dbReference type="GO" id="GO:0030490">
    <property type="term" value="P:maturation of SSU-rRNA"/>
    <property type="evidence" value="ECO:0007669"/>
    <property type="project" value="UniProtKB-UniRule"/>
</dbReference>
<dbReference type="Gene3D" id="3.30.300.20">
    <property type="match status" value="1"/>
</dbReference>
<dbReference type="HAMAP" id="MF_00003">
    <property type="entry name" value="RbfA"/>
    <property type="match status" value="1"/>
</dbReference>
<dbReference type="InterPro" id="IPR015946">
    <property type="entry name" value="KH_dom-like_a/b"/>
</dbReference>
<dbReference type="InterPro" id="IPR000238">
    <property type="entry name" value="RbfA"/>
</dbReference>
<dbReference type="InterPro" id="IPR023799">
    <property type="entry name" value="RbfA_dom_sf"/>
</dbReference>
<dbReference type="NCBIfam" id="TIGR00082">
    <property type="entry name" value="rbfA"/>
    <property type="match status" value="1"/>
</dbReference>
<dbReference type="PANTHER" id="PTHR33515">
    <property type="entry name" value="RIBOSOME-BINDING FACTOR A, CHLOROPLASTIC-RELATED"/>
    <property type="match status" value="1"/>
</dbReference>
<dbReference type="PANTHER" id="PTHR33515:SF1">
    <property type="entry name" value="RIBOSOME-BINDING FACTOR A, CHLOROPLASTIC-RELATED"/>
    <property type="match status" value="1"/>
</dbReference>
<dbReference type="Pfam" id="PF02033">
    <property type="entry name" value="RBFA"/>
    <property type="match status" value="1"/>
</dbReference>
<dbReference type="SUPFAM" id="SSF89919">
    <property type="entry name" value="Ribosome-binding factor A, RbfA"/>
    <property type="match status" value="1"/>
</dbReference>
<accession>Q482T8</accession>
<name>RBFA_COLP3</name>
<organism>
    <name type="scientific">Colwellia psychrerythraea (strain 34H / ATCC BAA-681)</name>
    <name type="common">Vibrio psychroerythus</name>
    <dbReference type="NCBI Taxonomy" id="167879"/>
    <lineage>
        <taxon>Bacteria</taxon>
        <taxon>Pseudomonadati</taxon>
        <taxon>Pseudomonadota</taxon>
        <taxon>Gammaproteobacteria</taxon>
        <taxon>Alteromonadales</taxon>
        <taxon>Colwelliaceae</taxon>
        <taxon>Colwellia</taxon>
    </lineage>
</organism>
<gene>
    <name evidence="1" type="primary">rbfA</name>
    <name type="ordered locus">CPS_2204</name>
</gene>
<evidence type="ECO:0000255" key="1">
    <source>
        <dbReference type="HAMAP-Rule" id="MF_00003"/>
    </source>
</evidence>
<evidence type="ECO:0000256" key="2">
    <source>
        <dbReference type="SAM" id="MobiDB-lite"/>
    </source>
</evidence>
<proteinExistence type="inferred from homology"/>
<reference key="1">
    <citation type="journal article" date="2005" name="Proc. Natl. Acad. Sci. U.S.A.">
        <title>The psychrophilic lifestyle as revealed by the genome sequence of Colwellia psychrerythraea 34H through genomic and proteomic analyses.</title>
        <authorList>
            <person name="Methe B.A."/>
            <person name="Nelson K.E."/>
            <person name="Deming J.W."/>
            <person name="Momen B."/>
            <person name="Melamud E."/>
            <person name="Zhang X."/>
            <person name="Moult J."/>
            <person name="Madupu R."/>
            <person name="Nelson W.C."/>
            <person name="Dodson R.J."/>
            <person name="Brinkac L.M."/>
            <person name="Daugherty S.C."/>
            <person name="Durkin A.S."/>
            <person name="DeBoy R.T."/>
            <person name="Kolonay J.F."/>
            <person name="Sullivan S.A."/>
            <person name="Zhou L."/>
            <person name="Davidsen T.M."/>
            <person name="Wu M."/>
            <person name="Huston A.L."/>
            <person name="Lewis M."/>
            <person name="Weaver B."/>
            <person name="Weidman J.F."/>
            <person name="Khouri H."/>
            <person name="Utterback T.R."/>
            <person name="Feldblyum T.V."/>
            <person name="Fraser C.M."/>
        </authorList>
    </citation>
    <scope>NUCLEOTIDE SEQUENCE [LARGE SCALE GENOMIC DNA]</scope>
    <source>
        <strain>34H / ATCC BAA-681</strain>
    </source>
</reference>
<feature type="chain" id="PRO_1000000100" description="Ribosome-binding factor A">
    <location>
        <begin position="1"/>
        <end position="142"/>
    </location>
</feature>
<feature type="region of interest" description="Disordered" evidence="2">
    <location>
        <begin position="118"/>
        <end position="142"/>
    </location>
</feature>
<feature type="compositionally biased region" description="Acidic residues" evidence="2">
    <location>
        <begin position="123"/>
        <end position="136"/>
    </location>
</feature>
<keyword id="KW-0963">Cytoplasm</keyword>
<keyword id="KW-0690">Ribosome biogenesis</keyword>
<protein>
    <recommendedName>
        <fullName evidence="1">Ribosome-binding factor A</fullName>
    </recommendedName>
</protein>
<comment type="function">
    <text evidence="1">One of several proteins that assist in the late maturation steps of the functional core of the 30S ribosomal subunit. Associates with free 30S ribosomal subunits (but not with 30S subunits that are part of 70S ribosomes or polysomes). Required for efficient processing of 16S rRNA. May interact with the 5'-terminal helix region of 16S rRNA.</text>
</comment>
<comment type="subunit">
    <text evidence="1">Monomer. Binds 30S ribosomal subunits, but not 50S ribosomal subunits or 70S ribosomes.</text>
</comment>
<comment type="subcellular location">
    <subcellularLocation>
        <location evidence="1">Cytoplasm</location>
    </subcellularLocation>
</comment>
<comment type="similarity">
    <text evidence="1">Belongs to the RbfA family.</text>
</comment>
<sequence>MAREYARTDRVGQQIQKEIATILMREIKDPRLSMTTVSAVEVTRDLAYAKIFVTFFNDNQDEIKASLEVLAEAEGYIRSLLGKRLRARIMPHLRFVYDSSMSEGVRMSALVDQAVASDKNGDAEVDDTQVDDEPSVDSEKGE</sequence>